<gene>
    <name evidence="1" type="primary">ubiG</name>
    <name type="ordered locus">M446_4744</name>
</gene>
<name>UBIG_METS4</name>
<organism>
    <name type="scientific">Methylobacterium sp. (strain 4-46)</name>
    <dbReference type="NCBI Taxonomy" id="426117"/>
    <lineage>
        <taxon>Bacteria</taxon>
        <taxon>Pseudomonadati</taxon>
        <taxon>Pseudomonadota</taxon>
        <taxon>Alphaproteobacteria</taxon>
        <taxon>Hyphomicrobiales</taxon>
        <taxon>Methylobacteriaceae</taxon>
        <taxon>Methylobacterium</taxon>
    </lineage>
</organism>
<keyword id="KW-0489">Methyltransferase</keyword>
<keyword id="KW-0949">S-adenosyl-L-methionine</keyword>
<keyword id="KW-0808">Transferase</keyword>
<keyword id="KW-0831">Ubiquinone biosynthesis</keyword>
<proteinExistence type="inferred from homology"/>
<accession>B0UAV0</accession>
<comment type="function">
    <text evidence="1">O-methyltransferase that catalyzes the 2 O-methylation steps in the ubiquinone biosynthetic pathway.</text>
</comment>
<comment type="catalytic activity">
    <reaction evidence="1">
        <text>a 3-demethylubiquinol + S-adenosyl-L-methionine = a ubiquinol + S-adenosyl-L-homocysteine + H(+)</text>
        <dbReference type="Rhea" id="RHEA:44380"/>
        <dbReference type="Rhea" id="RHEA-COMP:9566"/>
        <dbReference type="Rhea" id="RHEA-COMP:10914"/>
        <dbReference type="ChEBI" id="CHEBI:15378"/>
        <dbReference type="ChEBI" id="CHEBI:17976"/>
        <dbReference type="ChEBI" id="CHEBI:57856"/>
        <dbReference type="ChEBI" id="CHEBI:59789"/>
        <dbReference type="ChEBI" id="CHEBI:84422"/>
        <dbReference type="EC" id="2.1.1.64"/>
    </reaction>
</comment>
<comment type="catalytic activity">
    <reaction evidence="1">
        <text>a 3-(all-trans-polyprenyl)benzene-1,2-diol + S-adenosyl-L-methionine = a 2-methoxy-6-(all-trans-polyprenyl)phenol + S-adenosyl-L-homocysteine + H(+)</text>
        <dbReference type="Rhea" id="RHEA:31411"/>
        <dbReference type="Rhea" id="RHEA-COMP:9550"/>
        <dbReference type="Rhea" id="RHEA-COMP:9551"/>
        <dbReference type="ChEBI" id="CHEBI:15378"/>
        <dbReference type="ChEBI" id="CHEBI:57856"/>
        <dbReference type="ChEBI" id="CHEBI:59789"/>
        <dbReference type="ChEBI" id="CHEBI:62729"/>
        <dbReference type="ChEBI" id="CHEBI:62731"/>
        <dbReference type="EC" id="2.1.1.222"/>
    </reaction>
</comment>
<comment type="pathway">
    <text evidence="1">Cofactor biosynthesis; ubiquinone biosynthesis.</text>
</comment>
<comment type="similarity">
    <text evidence="1">Belongs to the methyltransferase superfamily. UbiG/COQ3 family.</text>
</comment>
<dbReference type="EC" id="2.1.1.222" evidence="1"/>
<dbReference type="EC" id="2.1.1.64" evidence="1"/>
<dbReference type="EMBL" id="CP000943">
    <property type="protein sequence ID" value="ACA19074.1"/>
    <property type="molecule type" value="Genomic_DNA"/>
</dbReference>
<dbReference type="RefSeq" id="WP_012334461.1">
    <property type="nucleotide sequence ID" value="NC_010511.1"/>
</dbReference>
<dbReference type="SMR" id="B0UAV0"/>
<dbReference type="STRING" id="426117.M446_4744"/>
<dbReference type="KEGG" id="met:M446_4744"/>
<dbReference type="eggNOG" id="COG2227">
    <property type="taxonomic scope" value="Bacteria"/>
</dbReference>
<dbReference type="HOGENOM" id="CLU_042432_0_0_5"/>
<dbReference type="UniPathway" id="UPA00232"/>
<dbReference type="GO" id="GO:0102208">
    <property type="term" value="F:2-polyprenyl-6-hydroxyphenol methylase activity"/>
    <property type="evidence" value="ECO:0007669"/>
    <property type="project" value="UniProtKB-EC"/>
</dbReference>
<dbReference type="GO" id="GO:0061542">
    <property type="term" value="F:3-demethylubiquinol 3-O-methyltransferase activity"/>
    <property type="evidence" value="ECO:0007669"/>
    <property type="project" value="UniProtKB-UniRule"/>
</dbReference>
<dbReference type="GO" id="GO:0010420">
    <property type="term" value="F:polyprenyldihydroxybenzoate methyltransferase activity"/>
    <property type="evidence" value="ECO:0007669"/>
    <property type="project" value="InterPro"/>
</dbReference>
<dbReference type="GO" id="GO:0032259">
    <property type="term" value="P:methylation"/>
    <property type="evidence" value="ECO:0007669"/>
    <property type="project" value="UniProtKB-KW"/>
</dbReference>
<dbReference type="CDD" id="cd02440">
    <property type="entry name" value="AdoMet_MTases"/>
    <property type="match status" value="1"/>
</dbReference>
<dbReference type="Gene3D" id="3.40.50.150">
    <property type="entry name" value="Vaccinia Virus protein VP39"/>
    <property type="match status" value="1"/>
</dbReference>
<dbReference type="HAMAP" id="MF_00472">
    <property type="entry name" value="UbiG"/>
    <property type="match status" value="1"/>
</dbReference>
<dbReference type="InterPro" id="IPR029063">
    <property type="entry name" value="SAM-dependent_MTases_sf"/>
</dbReference>
<dbReference type="InterPro" id="IPR010233">
    <property type="entry name" value="UbiG_MeTrfase"/>
</dbReference>
<dbReference type="NCBIfam" id="TIGR01983">
    <property type="entry name" value="UbiG"/>
    <property type="match status" value="1"/>
</dbReference>
<dbReference type="PANTHER" id="PTHR43464">
    <property type="entry name" value="METHYLTRANSFERASE"/>
    <property type="match status" value="1"/>
</dbReference>
<dbReference type="PANTHER" id="PTHR43464:SF19">
    <property type="entry name" value="UBIQUINONE BIOSYNTHESIS O-METHYLTRANSFERASE, MITOCHONDRIAL"/>
    <property type="match status" value="1"/>
</dbReference>
<dbReference type="Pfam" id="PF13489">
    <property type="entry name" value="Methyltransf_23"/>
    <property type="match status" value="1"/>
</dbReference>
<dbReference type="SUPFAM" id="SSF53335">
    <property type="entry name" value="S-adenosyl-L-methionine-dependent methyltransferases"/>
    <property type="match status" value="1"/>
</dbReference>
<sequence>MSAPTGPSIDAREVARFERIAATWWDEAGPMRVLHRFNPVRLAYIRDAACRHHGRDPLGPEPLAGLTLVDIGCGGGVLSEPLARLGARVTGLDPAPTNIRVAKAHAEEAGVPVDYRPQTIESVVAAGERFDLVVAMEVVEHVADMASFVRTACAAVRPGGLFFAATINRTMRSFALAIVGAEYVLGWLPRGTHDWEKFVTPEELARAVESGGLVVADTTGVVYHPLSGRWSAARDTAVNYMITAERPAA</sequence>
<reference key="1">
    <citation type="submission" date="2008-02" db="EMBL/GenBank/DDBJ databases">
        <title>Complete sequence of chromosome of Methylobacterium sp. 4-46.</title>
        <authorList>
            <consortium name="US DOE Joint Genome Institute"/>
            <person name="Copeland A."/>
            <person name="Lucas S."/>
            <person name="Lapidus A."/>
            <person name="Glavina del Rio T."/>
            <person name="Dalin E."/>
            <person name="Tice H."/>
            <person name="Bruce D."/>
            <person name="Goodwin L."/>
            <person name="Pitluck S."/>
            <person name="Chertkov O."/>
            <person name="Brettin T."/>
            <person name="Detter J.C."/>
            <person name="Han C."/>
            <person name="Kuske C.R."/>
            <person name="Schmutz J."/>
            <person name="Larimer F."/>
            <person name="Land M."/>
            <person name="Hauser L."/>
            <person name="Kyrpides N."/>
            <person name="Ivanova N."/>
            <person name="Marx C.J."/>
            <person name="Richardson P."/>
        </authorList>
    </citation>
    <scope>NUCLEOTIDE SEQUENCE [LARGE SCALE GENOMIC DNA]</scope>
    <source>
        <strain>4-46</strain>
    </source>
</reference>
<protein>
    <recommendedName>
        <fullName evidence="1">Ubiquinone biosynthesis O-methyltransferase</fullName>
    </recommendedName>
    <alternativeName>
        <fullName evidence="1">2-polyprenyl-6-hydroxyphenol methylase</fullName>
        <ecNumber evidence="1">2.1.1.222</ecNumber>
    </alternativeName>
    <alternativeName>
        <fullName evidence="1">3-demethylubiquinone 3-O-methyltransferase</fullName>
        <ecNumber evidence="1">2.1.1.64</ecNumber>
    </alternativeName>
</protein>
<feature type="chain" id="PRO_1000199688" description="Ubiquinone biosynthesis O-methyltransferase">
    <location>
        <begin position="1"/>
        <end position="249"/>
    </location>
</feature>
<feature type="binding site" evidence="1">
    <location>
        <position position="41"/>
    </location>
    <ligand>
        <name>S-adenosyl-L-methionine</name>
        <dbReference type="ChEBI" id="CHEBI:59789"/>
    </ligand>
</feature>
<feature type="binding site" evidence="1">
    <location>
        <position position="72"/>
    </location>
    <ligand>
        <name>S-adenosyl-L-methionine</name>
        <dbReference type="ChEBI" id="CHEBI:59789"/>
    </ligand>
</feature>
<feature type="binding site" evidence="1">
    <location>
        <position position="93"/>
    </location>
    <ligand>
        <name>S-adenosyl-L-methionine</name>
        <dbReference type="ChEBI" id="CHEBI:59789"/>
    </ligand>
</feature>
<feature type="binding site" evidence="1">
    <location>
        <position position="136"/>
    </location>
    <ligand>
        <name>S-adenosyl-L-methionine</name>
        <dbReference type="ChEBI" id="CHEBI:59789"/>
    </ligand>
</feature>
<evidence type="ECO:0000255" key="1">
    <source>
        <dbReference type="HAMAP-Rule" id="MF_00472"/>
    </source>
</evidence>